<proteinExistence type="evidence at protein level"/>
<feature type="chain" id="PRO_0000437164" description="Efflux pump apf11">
    <location>
        <begin position="1"/>
        <end position="562"/>
    </location>
</feature>
<feature type="transmembrane region" description="Helical" evidence="1">
    <location>
        <begin position="46"/>
        <end position="66"/>
    </location>
</feature>
<feature type="transmembrane region" description="Helical" evidence="1">
    <location>
        <begin position="83"/>
        <end position="103"/>
    </location>
</feature>
<feature type="transmembrane region" description="Helical" evidence="1">
    <location>
        <begin position="110"/>
        <end position="130"/>
    </location>
</feature>
<feature type="transmembrane region" description="Helical" evidence="1">
    <location>
        <begin position="141"/>
        <end position="161"/>
    </location>
</feature>
<feature type="transmembrane region" description="Helical" evidence="1">
    <location>
        <begin position="169"/>
        <end position="189"/>
    </location>
</feature>
<feature type="transmembrane region" description="Helical" evidence="1">
    <location>
        <begin position="200"/>
        <end position="220"/>
    </location>
</feature>
<feature type="transmembrane region" description="Helical" evidence="1">
    <location>
        <begin position="249"/>
        <end position="269"/>
    </location>
</feature>
<feature type="transmembrane region" description="Helical" evidence="1">
    <location>
        <begin position="278"/>
        <end position="298"/>
    </location>
</feature>
<feature type="transmembrane region" description="Helical" evidence="1">
    <location>
        <begin position="317"/>
        <end position="337"/>
    </location>
</feature>
<feature type="transmembrane region" description="Helical" evidence="1">
    <location>
        <begin position="356"/>
        <end position="376"/>
    </location>
</feature>
<feature type="transmembrane region" description="Helical" evidence="1">
    <location>
        <begin position="382"/>
        <end position="404"/>
    </location>
</feature>
<feature type="transmembrane region" description="Helical" evidence="1">
    <location>
        <begin position="414"/>
        <end position="434"/>
    </location>
</feature>
<feature type="transmembrane region" description="Helical" evidence="1">
    <location>
        <begin position="447"/>
        <end position="467"/>
    </location>
</feature>
<feature type="transmembrane region" description="Helical" evidence="1">
    <location>
        <begin position="516"/>
        <end position="536"/>
    </location>
</feature>
<feature type="region of interest" description="Disordered" evidence="3">
    <location>
        <begin position="1"/>
        <end position="36"/>
    </location>
</feature>
<feature type="compositionally biased region" description="Low complexity" evidence="3">
    <location>
        <begin position="1"/>
        <end position="10"/>
    </location>
</feature>
<feature type="compositionally biased region" description="Low complexity" evidence="3">
    <location>
        <begin position="18"/>
        <end position="30"/>
    </location>
</feature>
<feature type="glycosylation site" description="N-linked (GlcNAc...) asparagine" evidence="2">
    <location>
        <position position="22"/>
    </location>
</feature>
<feature type="glycosylation site" description="N-linked (GlcNAc...) asparagine" evidence="2">
    <location>
        <position position="312"/>
    </location>
</feature>
<gene>
    <name type="primary">apf11</name>
    <name type="ORF">FFUJ_00004</name>
</gene>
<accession>S0DPY2</accession>
<organism>
    <name type="scientific">Gibberella fujikuroi (strain CBS 195.34 / IMI 58289 / NRRL A-6831)</name>
    <name type="common">Bakanae and foot rot disease fungus</name>
    <name type="synonym">Fusarium fujikuroi</name>
    <dbReference type="NCBI Taxonomy" id="1279085"/>
    <lineage>
        <taxon>Eukaryota</taxon>
        <taxon>Fungi</taxon>
        <taxon>Dikarya</taxon>
        <taxon>Ascomycota</taxon>
        <taxon>Pezizomycotina</taxon>
        <taxon>Sordariomycetes</taxon>
        <taxon>Hypocreomycetidae</taxon>
        <taxon>Hypocreales</taxon>
        <taxon>Nectriaceae</taxon>
        <taxon>Fusarium</taxon>
        <taxon>Fusarium fujikuroi species complex</taxon>
    </lineage>
</organism>
<keyword id="KW-0325">Glycoprotein</keyword>
<keyword id="KW-0472">Membrane</keyword>
<keyword id="KW-1185">Reference proteome</keyword>
<keyword id="KW-0812">Transmembrane</keyword>
<keyword id="KW-1133">Transmembrane helix</keyword>
<protein>
    <recommendedName>
        <fullName evidence="6">Efflux pump apf11</fullName>
    </recommendedName>
    <alternativeName>
        <fullName evidence="6">Apicidin F synthesis protein 11</fullName>
    </alternativeName>
</protein>
<dbReference type="EMBL" id="HF679023">
    <property type="protein sequence ID" value="CCT63472.1"/>
    <property type="molecule type" value="Genomic_DNA"/>
</dbReference>
<dbReference type="SMR" id="S0DPY2"/>
<dbReference type="STRING" id="1279085.S0DPY2"/>
<dbReference type="GlyCosmos" id="S0DPY2">
    <property type="glycosylation" value="2 sites, No reported glycans"/>
</dbReference>
<dbReference type="EnsemblFungi" id="CCT63472">
    <property type="protein sequence ID" value="CCT63472"/>
    <property type="gene ID" value="FFUJ_00004"/>
</dbReference>
<dbReference type="VEuPathDB" id="FungiDB:FFUJ_00004"/>
<dbReference type="HOGENOM" id="CLU_000960_22_1_1"/>
<dbReference type="Proteomes" id="UP000016800">
    <property type="component" value="Chromosome 1"/>
</dbReference>
<dbReference type="GO" id="GO:0005886">
    <property type="term" value="C:plasma membrane"/>
    <property type="evidence" value="ECO:0007669"/>
    <property type="project" value="TreeGrafter"/>
</dbReference>
<dbReference type="GO" id="GO:0022857">
    <property type="term" value="F:transmembrane transporter activity"/>
    <property type="evidence" value="ECO:0007669"/>
    <property type="project" value="InterPro"/>
</dbReference>
<dbReference type="CDD" id="cd17502">
    <property type="entry name" value="MFS_Azr1_MDR_like"/>
    <property type="match status" value="1"/>
</dbReference>
<dbReference type="Gene3D" id="1.20.1250.20">
    <property type="entry name" value="MFS general substrate transporter like domains"/>
    <property type="match status" value="1"/>
</dbReference>
<dbReference type="Gene3D" id="1.20.1720.10">
    <property type="entry name" value="Multidrug resistance protein D"/>
    <property type="match status" value="1"/>
</dbReference>
<dbReference type="InterPro" id="IPR011701">
    <property type="entry name" value="MFS"/>
</dbReference>
<dbReference type="InterPro" id="IPR020846">
    <property type="entry name" value="MFS_dom"/>
</dbReference>
<dbReference type="InterPro" id="IPR036259">
    <property type="entry name" value="MFS_trans_sf"/>
</dbReference>
<dbReference type="PANTHER" id="PTHR23501:SF198">
    <property type="entry name" value="AZOLE RESISTANCE PROTEIN 1-RELATED"/>
    <property type="match status" value="1"/>
</dbReference>
<dbReference type="PANTHER" id="PTHR23501">
    <property type="entry name" value="MAJOR FACILITATOR SUPERFAMILY"/>
    <property type="match status" value="1"/>
</dbReference>
<dbReference type="Pfam" id="PF07690">
    <property type="entry name" value="MFS_1"/>
    <property type="match status" value="1"/>
</dbReference>
<dbReference type="PRINTS" id="PR01036">
    <property type="entry name" value="TCRTETB"/>
</dbReference>
<dbReference type="SUPFAM" id="SSF103473">
    <property type="entry name" value="MFS general substrate transporter"/>
    <property type="match status" value="1"/>
</dbReference>
<dbReference type="PROSITE" id="PS50850">
    <property type="entry name" value="MFS"/>
    <property type="match status" value="1"/>
</dbReference>
<reference key="1">
    <citation type="journal article" date="2013" name="PLoS Pathog.">
        <title>Deciphering the cryptic genome: genome-wide analyses of the rice pathogen Fusarium fujikuroi reveal complex regulation of secondary metabolism and novel metabolites.</title>
        <authorList>
            <person name="Wiemann P."/>
            <person name="Sieber C.M.K."/>
            <person name="von Bargen K.W."/>
            <person name="Studt L."/>
            <person name="Niehaus E.-M."/>
            <person name="Espino J.J."/>
            <person name="Huss K."/>
            <person name="Michielse C.B."/>
            <person name="Albermann S."/>
            <person name="Wagner D."/>
            <person name="Bergner S.V."/>
            <person name="Connolly L.R."/>
            <person name="Fischer A."/>
            <person name="Reuter G."/>
            <person name="Kleigrewe K."/>
            <person name="Bald T."/>
            <person name="Wingfield B.D."/>
            <person name="Ophir R."/>
            <person name="Freeman S."/>
            <person name="Hippler M."/>
            <person name="Smith K.M."/>
            <person name="Brown D.W."/>
            <person name="Proctor R.H."/>
            <person name="Muensterkoetter M."/>
            <person name="Freitag M."/>
            <person name="Humpf H.-U."/>
            <person name="Gueldener U."/>
            <person name="Tudzynski B."/>
        </authorList>
    </citation>
    <scope>NUCLEOTIDE SEQUENCE [LARGE SCALE GENOMIC DNA]</scope>
    <source>
        <strain>CBS 195.34 / IMI 58289 / NRRL A-6831</strain>
    </source>
</reference>
<reference key="2">
    <citation type="journal article" date="2013" name="J. Nat. Prod.">
        <title>Structure elucidation and antimalarial activity of apicidin F: an apicidin-like compound produced by Fusarium fujikuroi.</title>
        <authorList>
            <person name="von Bargen K.W."/>
            <person name="Niehaus E.M."/>
            <person name="Bergander K."/>
            <person name="Brun R."/>
            <person name="Tudzynski B."/>
            <person name="Humpf H.U."/>
        </authorList>
    </citation>
    <scope>BIOTECHNOLOGY</scope>
</reference>
<reference key="3">
    <citation type="journal article" date="2014" name="PLoS ONE">
        <title>Apicidin F: characterization and genetic manipulation of a new secondary metabolite gene cluster in the rice pathogen Fusarium fujikuroi.</title>
        <authorList>
            <person name="Niehaus E.M."/>
            <person name="Janevska S."/>
            <person name="von Bargen K.W."/>
            <person name="Sieber C.M."/>
            <person name="Harrer H."/>
            <person name="Humpf H.U."/>
            <person name="Tudzynski B."/>
        </authorList>
    </citation>
    <scope>FUNCTION</scope>
    <scope>INDUCTION</scope>
</reference>
<name>APF11_GIBF5</name>
<sequence length="562" mass="59647">MGDISAATKAPAPPTPATPETNTTSSSSDTDVQHEPQIPSAASRNLVIFALGLAILVGVLDATIVATLVPTIADDFHSVDSSAWYGSAYLLVTGATQPIFGKIYSTFQSKLVFLSSVAILEVGSLVCALAKNSPTFIGGRAIAGLGAAGVISGGLIITALTTPLKQRPVYTAILGSLEGVGVIIGPIIGGQIASSIGWRWCFWINLPIGAVLCAILVFCLHPPKQTPEREQEQAGKTWTQKLAQLDLEGGLAIAGSITCLLLALEWGGTSYPWSDGRIIVLLVVFGVSLICVAVHQHWKGEAATFPTRLLKNRTFSMFLLCGLCFAGAQFTVLYYLPMWFQAVQGVSAAESGTRLLAMVVSVIVVSVIAGGSAGAVGYLPPFVFFATIFSSIGAGMLYTLHPSISKSKWIGYQILFGAGSGTGIQQAIVGVQVAVDHDDMAYATSAVMLVNTLAGSIFIAVSQTLFLGEMKRVTELIPNLDRHTLLSNFRSIRDKLDHQELDIAVNAYNRGITKAFLIGLVLCSITVLTWPLIRWIPLKKTEDPVKSERRNDPETLNAGNVA</sequence>
<comment type="function">
    <text evidence="5">Efflux pump; part of the gene cluster that mediates the biosynthesis of the cyclic tetrapeptide apicidin F (APF) (PubMed:25058475).</text>
</comment>
<comment type="pathway">
    <text evidence="5">Secondary metabolite biosynthesis.</text>
</comment>
<comment type="subcellular location">
    <subcellularLocation>
        <location evidence="1">Membrane</location>
        <topology evidence="1">Multi-pass membrane protein</topology>
    </subcellularLocation>
</comment>
<comment type="induction">
    <text evidence="5">Expression is positively regulated by the apicidin F cluster-specific transcription factor apf2 that binds to the eight-base-pair motif 5'-TGACGTGA-3' called the 'Api-box' that is found in all promoters of the apicidin F cluster except in the promoter region of apf2 itself (PubMed:25058475).</text>
</comment>
<comment type="biotechnology">
    <text evidence="4">Apicidin F, like the other known apicidins, is a cyclic tetrapeptides with anti-malarial properties via histone deacetylase inhibitory activity (PubMed:24195442).</text>
</comment>
<comment type="similarity">
    <text evidence="7">Belongs to the major facilitator superfamily. TCR/Tet family.</text>
</comment>
<evidence type="ECO:0000255" key="1"/>
<evidence type="ECO:0000255" key="2">
    <source>
        <dbReference type="PROSITE-ProRule" id="PRU00498"/>
    </source>
</evidence>
<evidence type="ECO:0000256" key="3">
    <source>
        <dbReference type="SAM" id="MobiDB-lite"/>
    </source>
</evidence>
<evidence type="ECO:0000269" key="4">
    <source>
    </source>
</evidence>
<evidence type="ECO:0000269" key="5">
    <source>
    </source>
</evidence>
<evidence type="ECO:0000303" key="6">
    <source>
    </source>
</evidence>
<evidence type="ECO:0000305" key="7"/>